<evidence type="ECO:0000255" key="1">
    <source>
        <dbReference type="HAMAP-Rule" id="MF_00093"/>
    </source>
</evidence>
<feature type="chain" id="PRO_1000075521" description="Peptide chain release factor 1">
    <location>
        <begin position="1"/>
        <end position="359"/>
    </location>
</feature>
<feature type="modified residue" description="N5-methylglutamine" evidence="1">
    <location>
        <position position="236"/>
    </location>
</feature>
<proteinExistence type="inferred from homology"/>
<gene>
    <name evidence="1" type="primary">prfA</name>
    <name type="ordered locus">UPA3_0003</name>
</gene>
<reference key="1">
    <citation type="submission" date="2008-02" db="EMBL/GenBank/DDBJ databases">
        <title>Genome sequence of Ureaplasma parvum serovar 3.</title>
        <authorList>
            <person name="Methe B.A."/>
            <person name="Glass J."/>
            <person name="Waites K."/>
            <person name="Shrivastava S."/>
        </authorList>
    </citation>
    <scope>NUCLEOTIDE SEQUENCE [LARGE SCALE GENOMIC DNA]</scope>
    <source>
        <strain>ATCC 27815 / 27 / NCTC 11736</strain>
    </source>
</reference>
<comment type="function">
    <text evidence="1">Peptide chain release factor 1 directs the termination of translation in response to the peptide chain termination codons UAG and UAA.</text>
</comment>
<comment type="subcellular location">
    <subcellularLocation>
        <location evidence="1">Cytoplasm</location>
    </subcellularLocation>
</comment>
<comment type="PTM">
    <text evidence="1">Methylated by PrmC. Methylation increases the termination efficiency of RF1.</text>
</comment>
<comment type="similarity">
    <text evidence="1">Belongs to the prokaryotic/mitochondrial release factor family.</text>
</comment>
<keyword id="KW-0963">Cytoplasm</keyword>
<keyword id="KW-0488">Methylation</keyword>
<keyword id="KW-0648">Protein biosynthesis</keyword>
<dbReference type="EMBL" id="CP000942">
    <property type="protein sequence ID" value="ACA33038.1"/>
    <property type="molecule type" value="Genomic_DNA"/>
</dbReference>
<dbReference type="RefSeq" id="WP_006688457.1">
    <property type="nucleotide sequence ID" value="NC_010503.1"/>
</dbReference>
<dbReference type="SMR" id="B1AHY9"/>
<dbReference type="GeneID" id="29672265"/>
<dbReference type="KEGG" id="upa:UPA3_0003"/>
<dbReference type="HOGENOM" id="CLU_036856_0_1_14"/>
<dbReference type="Proteomes" id="UP000002162">
    <property type="component" value="Chromosome"/>
</dbReference>
<dbReference type="GO" id="GO:0005737">
    <property type="term" value="C:cytoplasm"/>
    <property type="evidence" value="ECO:0007669"/>
    <property type="project" value="UniProtKB-SubCell"/>
</dbReference>
<dbReference type="GO" id="GO:0016149">
    <property type="term" value="F:translation release factor activity, codon specific"/>
    <property type="evidence" value="ECO:0007669"/>
    <property type="project" value="UniProtKB-UniRule"/>
</dbReference>
<dbReference type="FunFam" id="3.30.160.20:FF:000004">
    <property type="entry name" value="Peptide chain release factor 1"/>
    <property type="match status" value="1"/>
</dbReference>
<dbReference type="FunFam" id="3.30.70.1660:FF:000002">
    <property type="entry name" value="Peptide chain release factor 1"/>
    <property type="match status" value="1"/>
</dbReference>
<dbReference type="FunFam" id="3.30.70.1660:FF:000004">
    <property type="entry name" value="Peptide chain release factor 1"/>
    <property type="match status" value="1"/>
</dbReference>
<dbReference type="Gene3D" id="3.30.160.20">
    <property type="match status" value="1"/>
</dbReference>
<dbReference type="Gene3D" id="3.30.70.1660">
    <property type="match status" value="1"/>
</dbReference>
<dbReference type="Gene3D" id="6.10.140.1950">
    <property type="match status" value="1"/>
</dbReference>
<dbReference type="HAMAP" id="MF_00093">
    <property type="entry name" value="Rel_fac_1"/>
    <property type="match status" value="1"/>
</dbReference>
<dbReference type="InterPro" id="IPR005139">
    <property type="entry name" value="PCRF"/>
</dbReference>
<dbReference type="InterPro" id="IPR000352">
    <property type="entry name" value="Pep_chain_release_fac_I"/>
</dbReference>
<dbReference type="InterPro" id="IPR045853">
    <property type="entry name" value="Pep_chain_release_fac_I_sf"/>
</dbReference>
<dbReference type="InterPro" id="IPR050057">
    <property type="entry name" value="Prokaryotic/Mito_RF"/>
</dbReference>
<dbReference type="InterPro" id="IPR004373">
    <property type="entry name" value="RF-1"/>
</dbReference>
<dbReference type="NCBIfam" id="TIGR00019">
    <property type="entry name" value="prfA"/>
    <property type="match status" value="1"/>
</dbReference>
<dbReference type="NCBIfam" id="NF001859">
    <property type="entry name" value="PRK00591.1"/>
    <property type="match status" value="1"/>
</dbReference>
<dbReference type="PANTHER" id="PTHR43804">
    <property type="entry name" value="LD18447P"/>
    <property type="match status" value="1"/>
</dbReference>
<dbReference type="PANTHER" id="PTHR43804:SF7">
    <property type="entry name" value="LD18447P"/>
    <property type="match status" value="1"/>
</dbReference>
<dbReference type="Pfam" id="PF03462">
    <property type="entry name" value="PCRF"/>
    <property type="match status" value="1"/>
</dbReference>
<dbReference type="Pfam" id="PF00472">
    <property type="entry name" value="RF-1"/>
    <property type="match status" value="1"/>
</dbReference>
<dbReference type="SMART" id="SM00937">
    <property type="entry name" value="PCRF"/>
    <property type="match status" value="1"/>
</dbReference>
<dbReference type="SUPFAM" id="SSF75620">
    <property type="entry name" value="Release factor"/>
    <property type="match status" value="1"/>
</dbReference>
<dbReference type="PROSITE" id="PS00745">
    <property type="entry name" value="RF_PROK_I"/>
    <property type="match status" value="1"/>
</dbReference>
<sequence length="359" mass="40577">MEYNKKLYEAIERVAIKNDALKKELETVVTDFKKIKEINIQLKKTTKIAEAFAKYKQKLDTGIAAEKILNTEKDLELIELAQMDLDEAKINIPIIENDLKIMLLPTDPNDDKNVIVEMRPAAGGDESSIFVGNLFDTYRAYAENNNWKMKIIEMTPNAVGFSFISFMISGEEVYSRMKFESGVHRVQRVPATESKGRVHTSTITVAVLPEQDEVDVVINPTELRIDTYRASGAGGQHVNRTESAVRITHIPTGVVAACQEGKSQIENRETAMKMLRAKLWEAAQEQQNAEFANLRKNQVGTGDRSEKIRTYNYPQNRVTDHRINLTLNKLDQIMMGELDEIIDALIADEQTGLMANLDI</sequence>
<name>RF1_UREP2</name>
<protein>
    <recommendedName>
        <fullName evidence="1">Peptide chain release factor 1</fullName>
        <shortName evidence="1">RF-1</shortName>
    </recommendedName>
</protein>
<accession>B1AHY9</accession>
<organism>
    <name type="scientific">Ureaplasma parvum serovar 3 (strain ATCC 27815 / 27 / NCTC 11736)</name>
    <dbReference type="NCBI Taxonomy" id="505682"/>
    <lineage>
        <taxon>Bacteria</taxon>
        <taxon>Bacillati</taxon>
        <taxon>Mycoplasmatota</taxon>
        <taxon>Mycoplasmoidales</taxon>
        <taxon>Mycoplasmoidaceae</taxon>
        <taxon>Ureaplasma</taxon>
    </lineage>
</organism>